<feature type="chain" id="PRO_0000276253" description="Photosystem II reaction center protein M">
    <location>
        <begin position="1"/>
        <end position="34"/>
    </location>
</feature>
<feature type="transmembrane region" description="Helical" evidence="1">
    <location>
        <begin position="5"/>
        <end position="25"/>
    </location>
</feature>
<reference key="1">
    <citation type="journal article" date="2005" name="Mol. Biol. Evol.">
        <title>The chloroplast genome sequence of the green alga Pseudendoclonium akinetum (Ulvophyceae) reveals unusual structural features and new insights into the branching order of chlorophyte lineages.</title>
        <authorList>
            <person name="Pombert J.-F."/>
            <person name="Otis C."/>
            <person name="Lemieux C."/>
            <person name="Turmel M."/>
        </authorList>
    </citation>
    <scope>NUCLEOTIDE SEQUENCE [LARGE SCALE GENOMIC DNA]</scope>
    <source>
        <strain>UTEX 1912</strain>
    </source>
</reference>
<dbReference type="EMBL" id="AY835431">
    <property type="protein sequence ID" value="AAV80695.1"/>
    <property type="molecule type" value="Genomic_DNA"/>
</dbReference>
<dbReference type="RefSeq" id="YP_636273.1">
    <property type="nucleotide sequence ID" value="NC_008114.1"/>
</dbReference>
<dbReference type="SMR" id="Q3ZIZ4"/>
<dbReference type="GeneID" id="4108768"/>
<dbReference type="GO" id="GO:0009535">
    <property type="term" value="C:chloroplast thylakoid membrane"/>
    <property type="evidence" value="ECO:0007669"/>
    <property type="project" value="UniProtKB-SubCell"/>
</dbReference>
<dbReference type="GO" id="GO:0009523">
    <property type="term" value="C:photosystem II"/>
    <property type="evidence" value="ECO:0007669"/>
    <property type="project" value="UniProtKB-KW"/>
</dbReference>
<dbReference type="GO" id="GO:0019684">
    <property type="term" value="P:photosynthesis, light reaction"/>
    <property type="evidence" value="ECO:0007669"/>
    <property type="project" value="InterPro"/>
</dbReference>
<dbReference type="HAMAP" id="MF_00438">
    <property type="entry name" value="PSII_PsbM"/>
    <property type="match status" value="1"/>
</dbReference>
<dbReference type="InterPro" id="IPR007826">
    <property type="entry name" value="PSII_PsbM"/>
</dbReference>
<dbReference type="InterPro" id="IPR037269">
    <property type="entry name" value="PSII_PsbM_sf"/>
</dbReference>
<dbReference type="NCBIfam" id="TIGR03038">
    <property type="entry name" value="PS_II_psbM"/>
    <property type="match status" value="1"/>
</dbReference>
<dbReference type="PANTHER" id="PTHR35774">
    <property type="entry name" value="PHOTOSYSTEM II REACTION CENTER PROTEIN M"/>
    <property type="match status" value="1"/>
</dbReference>
<dbReference type="PANTHER" id="PTHR35774:SF1">
    <property type="entry name" value="PHOTOSYSTEM II REACTION CENTER PROTEIN M"/>
    <property type="match status" value="1"/>
</dbReference>
<dbReference type="Pfam" id="PF05151">
    <property type="entry name" value="PsbM"/>
    <property type="match status" value="1"/>
</dbReference>
<dbReference type="SUPFAM" id="SSF161033">
    <property type="entry name" value="Photosystem II reaction center protein M, PsbM"/>
    <property type="match status" value="1"/>
</dbReference>
<geneLocation type="chloroplast"/>
<protein>
    <recommendedName>
        <fullName evidence="1">Photosystem II reaction center protein M</fullName>
        <shortName evidence="1">PSII-M</shortName>
    </recommendedName>
</protein>
<name>PSBM_TUPAK</name>
<sequence length="34" mass="3684">MEVNILGLMAVALFILIPTSFLLILYVKTASSSD</sequence>
<organism>
    <name type="scientific">Tupiella akineta</name>
    <name type="common">Green alga</name>
    <name type="synonym">Pseudendoclonium akinetum</name>
    <dbReference type="NCBI Taxonomy" id="160070"/>
    <lineage>
        <taxon>Eukaryota</taxon>
        <taxon>Viridiplantae</taxon>
        <taxon>Chlorophyta</taxon>
        <taxon>Ulvophyceae</taxon>
        <taxon>OUU clade</taxon>
        <taxon>Ulotrichales</taxon>
        <taxon>Tupiellaceae</taxon>
        <taxon>Tupiella</taxon>
    </lineage>
</organism>
<gene>
    <name evidence="1" type="primary">psbM</name>
</gene>
<proteinExistence type="inferred from homology"/>
<keyword id="KW-0150">Chloroplast</keyword>
<keyword id="KW-0472">Membrane</keyword>
<keyword id="KW-0602">Photosynthesis</keyword>
<keyword id="KW-0604">Photosystem II</keyword>
<keyword id="KW-0934">Plastid</keyword>
<keyword id="KW-0674">Reaction center</keyword>
<keyword id="KW-0793">Thylakoid</keyword>
<keyword id="KW-0812">Transmembrane</keyword>
<keyword id="KW-1133">Transmembrane helix</keyword>
<comment type="function">
    <text evidence="1">One of the components of the core complex of photosystem II (PSII). PSII is a light-driven water:plastoquinone oxidoreductase that uses light energy to abstract electrons from H(2)O, generating O(2) and a proton gradient subsequently used for ATP formation. It consists of a core antenna complex that captures photons, and an electron transfer chain that converts photonic excitation into a charge separation. This subunit is found at the monomer-monomer interface.</text>
</comment>
<comment type="subunit">
    <text evidence="1">PSII is composed of 1 copy each of membrane proteins PsbA, PsbB, PsbC, PsbD, PsbE, PsbF, PsbH, PsbI, PsbJ, PsbK, PsbL, PsbM, PsbT, PsbX, PsbY, PsbZ, Psb30/Ycf12, at least 3 peripheral proteins of the oxygen-evolving complex and a large number of cofactors. It forms dimeric complexes.</text>
</comment>
<comment type="subcellular location">
    <subcellularLocation>
        <location evidence="1">Plastid</location>
        <location evidence="1">Chloroplast thylakoid membrane</location>
        <topology evidence="1">Single-pass membrane protein</topology>
    </subcellularLocation>
</comment>
<comment type="similarity">
    <text evidence="1">Belongs to the PsbM family.</text>
</comment>
<evidence type="ECO:0000255" key="1">
    <source>
        <dbReference type="HAMAP-Rule" id="MF_00438"/>
    </source>
</evidence>
<accession>Q3ZIZ4</accession>